<gene>
    <name evidence="1" type="primary">cysS</name>
    <name type="ordered locus">Noc_2249</name>
</gene>
<sequence length="485" mass="54778">MLRIYNSLTRRKEEFIPIESGKVRMYVCGMTVYDLCHVGHARVMVVFDMVVRYLRASGFEVIYVRNITDIDDKIIHRANERGESIHTLTARYIQALHEDEASLQILPPDREPRATESMEAILAMVRQLLDQGYAYQGENGDIYYDVSHFEGYGALSGRHLEDLRAGERVQVNEAKTDPLDFVLWKAAKSGEPAWESPWGPGRPGWHIECSAMSIQELGTHFDIHGGGQDLQFPHHENEIAQSEAATGGKFVNYWMHNGFVRLNDEKMSKSLGNFFTVREVLEHYHPEVLRYFILSSHYRSPLNYTKQQLDTAKAAMTRLYTALRGIPRGEDRASAQGLSWEFTDGGDPFVLRFREAMDDDFNTPEALALLNEVRHALNRAREAGDTEKGQSLAVLLRSLGGILGLLAHEPEQFLRDSRQVAAIPDTAAAGEEAVLSHDGIEQLVAQRTVARKNKDWAEADRIRGILKDQGITLEDTAAGTLWRRG</sequence>
<keyword id="KW-0030">Aminoacyl-tRNA synthetase</keyword>
<keyword id="KW-0067">ATP-binding</keyword>
<keyword id="KW-0963">Cytoplasm</keyword>
<keyword id="KW-0436">Ligase</keyword>
<keyword id="KW-0479">Metal-binding</keyword>
<keyword id="KW-0547">Nucleotide-binding</keyword>
<keyword id="KW-0648">Protein biosynthesis</keyword>
<keyword id="KW-1185">Reference proteome</keyword>
<keyword id="KW-0862">Zinc</keyword>
<accession>Q3J8Y9</accession>
<protein>
    <recommendedName>
        <fullName evidence="1">Cysteine--tRNA ligase</fullName>
        <ecNumber evidence="1">6.1.1.16</ecNumber>
    </recommendedName>
    <alternativeName>
        <fullName evidence="1">Cysteinyl-tRNA synthetase</fullName>
        <shortName evidence="1">CysRS</shortName>
    </alternativeName>
</protein>
<evidence type="ECO:0000255" key="1">
    <source>
        <dbReference type="HAMAP-Rule" id="MF_00041"/>
    </source>
</evidence>
<reference key="1">
    <citation type="journal article" date="2006" name="Appl. Environ. Microbiol.">
        <title>Complete genome sequence of the marine, chemolithoautotrophic, ammonia-oxidizing bacterium Nitrosococcus oceani ATCC 19707.</title>
        <authorList>
            <person name="Klotz M.G."/>
            <person name="Arp D.J."/>
            <person name="Chain P.S.G."/>
            <person name="El-Sheikh A.F."/>
            <person name="Hauser L.J."/>
            <person name="Hommes N.G."/>
            <person name="Larimer F.W."/>
            <person name="Malfatti S.A."/>
            <person name="Norton J.M."/>
            <person name="Poret-Peterson A.T."/>
            <person name="Vergez L.M."/>
            <person name="Ward B.B."/>
        </authorList>
    </citation>
    <scope>NUCLEOTIDE SEQUENCE [LARGE SCALE GENOMIC DNA]</scope>
    <source>
        <strain>ATCC 19707 / BCRC 17464 / JCM 30415 / NCIMB 11848 / C-107</strain>
    </source>
</reference>
<comment type="catalytic activity">
    <reaction evidence="1">
        <text>tRNA(Cys) + L-cysteine + ATP = L-cysteinyl-tRNA(Cys) + AMP + diphosphate</text>
        <dbReference type="Rhea" id="RHEA:17773"/>
        <dbReference type="Rhea" id="RHEA-COMP:9661"/>
        <dbReference type="Rhea" id="RHEA-COMP:9679"/>
        <dbReference type="ChEBI" id="CHEBI:30616"/>
        <dbReference type="ChEBI" id="CHEBI:33019"/>
        <dbReference type="ChEBI" id="CHEBI:35235"/>
        <dbReference type="ChEBI" id="CHEBI:78442"/>
        <dbReference type="ChEBI" id="CHEBI:78517"/>
        <dbReference type="ChEBI" id="CHEBI:456215"/>
        <dbReference type="EC" id="6.1.1.16"/>
    </reaction>
</comment>
<comment type="cofactor">
    <cofactor evidence="1">
        <name>Zn(2+)</name>
        <dbReference type="ChEBI" id="CHEBI:29105"/>
    </cofactor>
    <text evidence="1">Binds 1 zinc ion per subunit.</text>
</comment>
<comment type="subunit">
    <text evidence="1">Monomer.</text>
</comment>
<comment type="subcellular location">
    <subcellularLocation>
        <location evidence="1">Cytoplasm</location>
    </subcellularLocation>
</comment>
<comment type="similarity">
    <text evidence="1">Belongs to the class-I aminoacyl-tRNA synthetase family.</text>
</comment>
<name>SYC_NITOC</name>
<dbReference type="EC" id="6.1.1.16" evidence="1"/>
<dbReference type="EMBL" id="CP000127">
    <property type="protein sequence ID" value="ABA58707.1"/>
    <property type="molecule type" value="Genomic_DNA"/>
</dbReference>
<dbReference type="RefSeq" id="WP_002808606.1">
    <property type="nucleotide sequence ID" value="NC_007484.1"/>
</dbReference>
<dbReference type="SMR" id="Q3J8Y9"/>
<dbReference type="FunCoup" id="Q3J8Y9">
    <property type="interactions" value="506"/>
</dbReference>
<dbReference type="STRING" id="323261.Noc_2249"/>
<dbReference type="KEGG" id="noc:Noc_2249"/>
<dbReference type="eggNOG" id="COG0215">
    <property type="taxonomic scope" value="Bacteria"/>
</dbReference>
<dbReference type="HOGENOM" id="CLU_013528_0_1_6"/>
<dbReference type="InParanoid" id="Q3J8Y9"/>
<dbReference type="Proteomes" id="UP000006838">
    <property type="component" value="Chromosome"/>
</dbReference>
<dbReference type="GO" id="GO:0005829">
    <property type="term" value="C:cytosol"/>
    <property type="evidence" value="ECO:0007669"/>
    <property type="project" value="TreeGrafter"/>
</dbReference>
<dbReference type="GO" id="GO:0005524">
    <property type="term" value="F:ATP binding"/>
    <property type="evidence" value="ECO:0007669"/>
    <property type="project" value="UniProtKB-UniRule"/>
</dbReference>
<dbReference type="GO" id="GO:0004817">
    <property type="term" value="F:cysteine-tRNA ligase activity"/>
    <property type="evidence" value="ECO:0007669"/>
    <property type="project" value="UniProtKB-UniRule"/>
</dbReference>
<dbReference type="GO" id="GO:0008270">
    <property type="term" value="F:zinc ion binding"/>
    <property type="evidence" value="ECO:0007669"/>
    <property type="project" value="UniProtKB-UniRule"/>
</dbReference>
<dbReference type="GO" id="GO:0006423">
    <property type="term" value="P:cysteinyl-tRNA aminoacylation"/>
    <property type="evidence" value="ECO:0007669"/>
    <property type="project" value="UniProtKB-UniRule"/>
</dbReference>
<dbReference type="CDD" id="cd07963">
    <property type="entry name" value="Anticodon_Ia_Cys"/>
    <property type="match status" value="1"/>
</dbReference>
<dbReference type="CDD" id="cd00672">
    <property type="entry name" value="CysRS_core"/>
    <property type="match status" value="1"/>
</dbReference>
<dbReference type="FunFam" id="3.40.50.620:FF:000009">
    <property type="entry name" value="Cysteine--tRNA ligase"/>
    <property type="match status" value="1"/>
</dbReference>
<dbReference type="Gene3D" id="1.20.120.1910">
    <property type="entry name" value="Cysteine-tRNA ligase, C-terminal anti-codon recognition domain"/>
    <property type="match status" value="1"/>
</dbReference>
<dbReference type="Gene3D" id="3.40.50.620">
    <property type="entry name" value="HUPs"/>
    <property type="match status" value="1"/>
</dbReference>
<dbReference type="HAMAP" id="MF_00041">
    <property type="entry name" value="Cys_tRNA_synth"/>
    <property type="match status" value="1"/>
</dbReference>
<dbReference type="InterPro" id="IPR015803">
    <property type="entry name" value="Cys-tRNA-ligase"/>
</dbReference>
<dbReference type="InterPro" id="IPR015273">
    <property type="entry name" value="Cys-tRNA-synt_Ia_DALR"/>
</dbReference>
<dbReference type="InterPro" id="IPR024909">
    <property type="entry name" value="Cys-tRNA/MSH_ligase"/>
</dbReference>
<dbReference type="InterPro" id="IPR056411">
    <property type="entry name" value="CysS_C"/>
</dbReference>
<dbReference type="InterPro" id="IPR014729">
    <property type="entry name" value="Rossmann-like_a/b/a_fold"/>
</dbReference>
<dbReference type="InterPro" id="IPR032678">
    <property type="entry name" value="tRNA-synt_1_cat_dom"/>
</dbReference>
<dbReference type="InterPro" id="IPR009080">
    <property type="entry name" value="tRNAsynth_Ia_anticodon-bd"/>
</dbReference>
<dbReference type="NCBIfam" id="TIGR00435">
    <property type="entry name" value="cysS"/>
    <property type="match status" value="1"/>
</dbReference>
<dbReference type="PANTHER" id="PTHR10890:SF3">
    <property type="entry name" value="CYSTEINE--TRNA LIGASE, CYTOPLASMIC"/>
    <property type="match status" value="1"/>
</dbReference>
<dbReference type="PANTHER" id="PTHR10890">
    <property type="entry name" value="CYSTEINYL-TRNA SYNTHETASE"/>
    <property type="match status" value="1"/>
</dbReference>
<dbReference type="Pfam" id="PF23493">
    <property type="entry name" value="CysS_C"/>
    <property type="match status" value="1"/>
</dbReference>
<dbReference type="Pfam" id="PF09190">
    <property type="entry name" value="DALR_2"/>
    <property type="match status" value="1"/>
</dbReference>
<dbReference type="Pfam" id="PF01406">
    <property type="entry name" value="tRNA-synt_1e"/>
    <property type="match status" value="1"/>
</dbReference>
<dbReference type="PRINTS" id="PR00983">
    <property type="entry name" value="TRNASYNTHCYS"/>
</dbReference>
<dbReference type="SMART" id="SM00840">
    <property type="entry name" value="DALR_2"/>
    <property type="match status" value="1"/>
</dbReference>
<dbReference type="SUPFAM" id="SSF47323">
    <property type="entry name" value="Anticodon-binding domain of a subclass of class I aminoacyl-tRNA synthetases"/>
    <property type="match status" value="1"/>
</dbReference>
<dbReference type="SUPFAM" id="SSF52374">
    <property type="entry name" value="Nucleotidylyl transferase"/>
    <property type="match status" value="1"/>
</dbReference>
<feature type="chain" id="PRO_0000240927" description="Cysteine--tRNA ligase">
    <location>
        <begin position="1"/>
        <end position="485"/>
    </location>
</feature>
<feature type="short sequence motif" description="'HIGH' region">
    <location>
        <begin position="30"/>
        <end position="40"/>
    </location>
</feature>
<feature type="short sequence motif" description="'KMSKS' region">
    <location>
        <begin position="266"/>
        <end position="270"/>
    </location>
</feature>
<feature type="binding site" evidence="1">
    <location>
        <position position="28"/>
    </location>
    <ligand>
        <name>Zn(2+)</name>
        <dbReference type="ChEBI" id="CHEBI:29105"/>
    </ligand>
</feature>
<feature type="binding site" evidence="1">
    <location>
        <position position="209"/>
    </location>
    <ligand>
        <name>Zn(2+)</name>
        <dbReference type="ChEBI" id="CHEBI:29105"/>
    </ligand>
</feature>
<feature type="binding site" evidence="1">
    <location>
        <position position="234"/>
    </location>
    <ligand>
        <name>Zn(2+)</name>
        <dbReference type="ChEBI" id="CHEBI:29105"/>
    </ligand>
</feature>
<feature type="binding site" evidence="1">
    <location>
        <position position="238"/>
    </location>
    <ligand>
        <name>Zn(2+)</name>
        <dbReference type="ChEBI" id="CHEBI:29105"/>
    </ligand>
</feature>
<feature type="binding site" evidence="1">
    <location>
        <position position="269"/>
    </location>
    <ligand>
        <name>ATP</name>
        <dbReference type="ChEBI" id="CHEBI:30616"/>
    </ligand>
</feature>
<proteinExistence type="inferred from homology"/>
<organism>
    <name type="scientific">Nitrosococcus oceani (strain ATCC 19707 / BCRC 17464 / JCM 30415 / NCIMB 11848 / C-107)</name>
    <dbReference type="NCBI Taxonomy" id="323261"/>
    <lineage>
        <taxon>Bacteria</taxon>
        <taxon>Pseudomonadati</taxon>
        <taxon>Pseudomonadota</taxon>
        <taxon>Gammaproteobacteria</taxon>
        <taxon>Chromatiales</taxon>
        <taxon>Chromatiaceae</taxon>
        <taxon>Nitrosococcus</taxon>
    </lineage>
</organism>